<gene>
    <name evidence="1" type="primary">dusB</name>
    <name type="ordered locus">VV1_1232</name>
</gene>
<name>DUSB_VIBVU</name>
<reference key="1">
    <citation type="submission" date="2002-12" db="EMBL/GenBank/DDBJ databases">
        <title>Complete genome sequence of Vibrio vulnificus CMCP6.</title>
        <authorList>
            <person name="Rhee J.H."/>
            <person name="Kim S.Y."/>
            <person name="Chung S.S."/>
            <person name="Kim J.J."/>
            <person name="Moon Y.H."/>
            <person name="Jeong H."/>
            <person name="Choy H.E."/>
        </authorList>
    </citation>
    <scope>NUCLEOTIDE SEQUENCE [LARGE SCALE GENOMIC DNA]</scope>
    <source>
        <strain>CMCP6</strain>
    </source>
</reference>
<protein>
    <recommendedName>
        <fullName evidence="1">tRNA-dihydrouridine synthase B</fullName>
        <ecNumber evidence="1">1.3.1.-</ecNumber>
    </recommendedName>
</protein>
<proteinExistence type="inferred from homology"/>
<accession>Q8CWL2</accession>
<comment type="function">
    <text evidence="1">Catalyzes the synthesis of 5,6-dihydrouridine (D), a modified base found in the D-loop of most tRNAs, via the reduction of the C5-C6 double bond in target uridines.</text>
</comment>
<comment type="catalytic activity">
    <reaction evidence="1">
        <text>a 5,6-dihydrouridine in tRNA + NAD(+) = a uridine in tRNA + NADH + H(+)</text>
        <dbReference type="Rhea" id="RHEA:54452"/>
        <dbReference type="Rhea" id="RHEA-COMP:13339"/>
        <dbReference type="Rhea" id="RHEA-COMP:13887"/>
        <dbReference type="ChEBI" id="CHEBI:15378"/>
        <dbReference type="ChEBI" id="CHEBI:57540"/>
        <dbReference type="ChEBI" id="CHEBI:57945"/>
        <dbReference type="ChEBI" id="CHEBI:65315"/>
        <dbReference type="ChEBI" id="CHEBI:74443"/>
    </reaction>
</comment>
<comment type="catalytic activity">
    <reaction evidence="1">
        <text>a 5,6-dihydrouridine in tRNA + NADP(+) = a uridine in tRNA + NADPH + H(+)</text>
        <dbReference type="Rhea" id="RHEA:23624"/>
        <dbReference type="Rhea" id="RHEA-COMP:13339"/>
        <dbReference type="Rhea" id="RHEA-COMP:13887"/>
        <dbReference type="ChEBI" id="CHEBI:15378"/>
        <dbReference type="ChEBI" id="CHEBI:57783"/>
        <dbReference type="ChEBI" id="CHEBI:58349"/>
        <dbReference type="ChEBI" id="CHEBI:65315"/>
        <dbReference type="ChEBI" id="CHEBI:74443"/>
    </reaction>
</comment>
<comment type="cofactor">
    <cofactor evidence="1">
        <name>FMN</name>
        <dbReference type="ChEBI" id="CHEBI:58210"/>
    </cofactor>
</comment>
<comment type="similarity">
    <text evidence="1">Belongs to the Dus family. DusB subfamily.</text>
</comment>
<evidence type="ECO:0000255" key="1">
    <source>
        <dbReference type="HAMAP-Rule" id="MF_02042"/>
    </source>
</evidence>
<feature type="chain" id="PRO_0000162103" description="tRNA-dihydrouridine synthase B">
    <location>
        <begin position="1"/>
        <end position="322"/>
    </location>
</feature>
<feature type="active site" description="Proton donor" evidence="1">
    <location>
        <position position="100"/>
    </location>
</feature>
<feature type="binding site" evidence="1">
    <location>
        <begin position="16"/>
        <end position="18"/>
    </location>
    <ligand>
        <name>FMN</name>
        <dbReference type="ChEBI" id="CHEBI:58210"/>
    </ligand>
</feature>
<feature type="binding site" evidence="1">
    <location>
        <position position="70"/>
    </location>
    <ligand>
        <name>FMN</name>
        <dbReference type="ChEBI" id="CHEBI:58210"/>
    </ligand>
</feature>
<feature type="binding site" evidence="1">
    <location>
        <position position="139"/>
    </location>
    <ligand>
        <name>FMN</name>
        <dbReference type="ChEBI" id="CHEBI:58210"/>
    </ligand>
</feature>
<feature type="binding site" evidence="1">
    <location>
        <begin position="200"/>
        <end position="202"/>
    </location>
    <ligand>
        <name>FMN</name>
        <dbReference type="ChEBI" id="CHEBI:58210"/>
    </ligand>
</feature>
<feature type="binding site" evidence="1">
    <location>
        <begin position="224"/>
        <end position="225"/>
    </location>
    <ligand>
        <name>FMN</name>
        <dbReference type="ChEBI" id="CHEBI:58210"/>
    </ligand>
</feature>
<sequence length="322" mass="35679">MKIGNYQLKNKLIVAPMAGVTDRPFRELCLRYGAGMAVSEMMSSNPQLWKTSKSKQRMVHEGESGIRSVQIAGSDPQLMADAAQFSVENGAQIIDINMGCPAKKVNKKLAGSALLKYPDIIEQILKAVVDAVDVPVTLKTRTGWDTENKNCIHIAKLAEDCGIQALALHGRTKACMYKGEAEYDSIKAVKQAVSIPVIANGDIDSPEKAKYVLEYTGADALMIGRPAQGRPWIFQEIHHYLENGTTMPELPIEEVKSIMLGHVQALHEFYGEYLGPRIARKHVGWYLKEHEQASEFRRTFNAIDAAMLQLEALEGYFDNVAS</sequence>
<organism>
    <name type="scientific">Vibrio vulnificus (strain CMCP6)</name>
    <dbReference type="NCBI Taxonomy" id="216895"/>
    <lineage>
        <taxon>Bacteria</taxon>
        <taxon>Pseudomonadati</taxon>
        <taxon>Pseudomonadota</taxon>
        <taxon>Gammaproteobacteria</taxon>
        <taxon>Vibrionales</taxon>
        <taxon>Vibrionaceae</taxon>
        <taxon>Vibrio</taxon>
    </lineage>
</organism>
<dbReference type="EC" id="1.3.1.-" evidence="1"/>
<dbReference type="EMBL" id="AE016795">
    <property type="protein sequence ID" value="AAO09689.2"/>
    <property type="molecule type" value="Genomic_DNA"/>
</dbReference>
<dbReference type="RefSeq" id="WP_011079218.1">
    <property type="nucleotide sequence ID" value="NC_004459.3"/>
</dbReference>
<dbReference type="SMR" id="Q8CWL2"/>
<dbReference type="GeneID" id="93895497"/>
<dbReference type="KEGG" id="vvu:VV1_1232"/>
<dbReference type="HOGENOM" id="CLU_013299_0_1_6"/>
<dbReference type="Proteomes" id="UP000002275">
    <property type="component" value="Chromosome 1"/>
</dbReference>
<dbReference type="GO" id="GO:0050660">
    <property type="term" value="F:flavin adenine dinucleotide binding"/>
    <property type="evidence" value="ECO:0007669"/>
    <property type="project" value="InterPro"/>
</dbReference>
<dbReference type="GO" id="GO:0010181">
    <property type="term" value="F:FMN binding"/>
    <property type="evidence" value="ECO:0007669"/>
    <property type="project" value="UniProtKB-UniRule"/>
</dbReference>
<dbReference type="GO" id="GO:0000049">
    <property type="term" value="F:tRNA binding"/>
    <property type="evidence" value="ECO:0007669"/>
    <property type="project" value="UniProtKB-UniRule"/>
</dbReference>
<dbReference type="GO" id="GO:0017150">
    <property type="term" value="F:tRNA dihydrouridine synthase activity"/>
    <property type="evidence" value="ECO:0007669"/>
    <property type="project" value="UniProtKB-UniRule"/>
</dbReference>
<dbReference type="CDD" id="cd02801">
    <property type="entry name" value="DUS_like_FMN"/>
    <property type="match status" value="1"/>
</dbReference>
<dbReference type="FunFam" id="3.20.20.70:FF:000051">
    <property type="entry name" value="tRNA-dihydrouridine synthase B"/>
    <property type="match status" value="1"/>
</dbReference>
<dbReference type="Gene3D" id="3.20.20.70">
    <property type="entry name" value="Aldolase class I"/>
    <property type="match status" value="1"/>
</dbReference>
<dbReference type="Gene3D" id="1.10.1200.80">
    <property type="entry name" value="Putative flavin oxidoreducatase, domain 2"/>
    <property type="match status" value="1"/>
</dbReference>
<dbReference type="HAMAP" id="MF_02042">
    <property type="entry name" value="DusB_subfam"/>
    <property type="match status" value="1"/>
</dbReference>
<dbReference type="InterPro" id="IPR013785">
    <property type="entry name" value="Aldolase_TIM"/>
</dbReference>
<dbReference type="InterPro" id="IPR035587">
    <property type="entry name" value="DUS-like_FMN-bd"/>
</dbReference>
<dbReference type="InterPro" id="IPR001269">
    <property type="entry name" value="DUS_fam"/>
</dbReference>
<dbReference type="InterPro" id="IPR032887">
    <property type="entry name" value="DusB"/>
</dbReference>
<dbReference type="InterPro" id="IPR004652">
    <property type="entry name" value="DusB-like"/>
</dbReference>
<dbReference type="InterPro" id="IPR024036">
    <property type="entry name" value="tRNA-dHydroUridine_Synthase_C"/>
</dbReference>
<dbReference type="InterPro" id="IPR018517">
    <property type="entry name" value="tRNA_hU_synthase_CS"/>
</dbReference>
<dbReference type="NCBIfam" id="TIGR00737">
    <property type="entry name" value="nifR3_yhdG"/>
    <property type="match status" value="1"/>
</dbReference>
<dbReference type="PANTHER" id="PTHR45846">
    <property type="entry name" value="TRNA-DIHYDROURIDINE(47) SYNTHASE [NAD(P)(+)]-LIKE"/>
    <property type="match status" value="1"/>
</dbReference>
<dbReference type="PANTHER" id="PTHR45846:SF1">
    <property type="entry name" value="TRNA-DIHYDROURIDINE(47) SYNTHASE [NAD(P)(+)]-LIKE"/>
    <property type="match status" value="1"/>
</dbReference>
<dbReference type="Pfam" id="PF01207">
    <property type="entry name" value="Dus"/>
    <property type="match status" value="1"/>
</dbReference>
<dbReference type="PIRSF" id="PIRSF006621">
    <property type="entry name" value="Dus"/>
    <property type="match status" value="1"/>
</dbReference>
<dbReference type="SUPFAM" id="SSF51395">
    <property type="entry name" value="FMN-linked oxidoreductases"/>
    <property type="match status" value="1"/>
</dbReference>
<dbReference type="PROSITE" id="PS01136">
    <property type="entry name" value="UPF0034"/>
    <property type="match status" value="1"/>
</dbReference>
<keyword id="KW-0285">Flavoprotein</keyword>
<keyword id="KW-0288">FMN</keyword>
<keyword id="KW-0521">NADP</keyword>
<keyword id="KW-0560">Oxidoreductase</keyword>
<keyword id="KW-0694">RNA-binding</keyword>
<keyword id="KW-0819">tRNA processing</keyword>
<keyword id="KW-0820">tRNA-binding</keyword>